<protein>
    <recommendedName>
        <fullName evidence="1">Oligoribonuclease</fullName>
        <ecNumber evidence="1">3.1.15.-</ecNumber>
    </recommendedName>
</protein>
<reference key="1">
    <citation type="journal article" date="2005" name="J. Bacteriol.">
        <title>Insights into genome plasticity and pathogenicity of the plant pathogenic Bacterium Xanthomonas campestris pv. vesicatoria revealed by the complete genome sequence.</title>
        <authorList>
            <person name="Thieme F."/>
            <person name="Koebnik R."/>
            <person name="Bekel T."/>
            <person name="Berger C."/>
            <person name="Boch J."/>
            <person name="Buettner D."/>
            <person name="Caldana C."/>
            <person name="Gaigalat L."/>
            <person name="Goesmann A."/>
            <person name="Kay S."/>
            <person name="Kirchner O."/>
            <person name="Lanz C."/>
            <person name="Linke B."/>
            <person name="McHardy A.C."/>
            <person name="Meyer F."/>
            <person name="Mittenhuber G."/>
            <person name="Nies D.H."/>
            <person name="Niesbach-Kloesgen U."/>
            <person name="Patschkowski T."/>
            <person name="Rueckert C."/>
            <person name="Rupp O."/>
            <person name="Schneiker S."/>
            <person name="Schuster S.C."/>
            <person name="Vorhoelter F.J."/>
            <person name="Weber E."/>
            <person name="Puehler A."/>
            <person name="Bonas U."/>
            <person name="Bartels D."/>
            <person name="Kaiser O."/>
        </authorList>
    </citation>
    <scope>NUCLEOTIDE SEQUENCE [LARGE SCALE GENOMIC DNA]</scope>
    <source>
        <strain>85-10</strain>
    </source>
</reference>
<organism>
    <name type="scientific">Xanthomonas euvesicatoria pv. vesicatoria (strain 85-10)</name>
    <name type="common">Xanthomonas campestris pv. vesicatoria</name>
    <dbReference type="NCBI Taxonomy" id="316273"/>
    <lineage>
        <taxon>Bacteria</taxon>
        <taxon>Pseudomonadati</taxon>
        <taxon>Pseudomonadota</taxon>
        <taxon>Gammaproteobacteria</taxon>
        <taxon>Lysobacterales</taxon>
        <taxon>Lysobacteraceae</taxon>
        <taxon>Xanthomonas</taxon>
    </lineage>
</organism>
<dbReference type="EC" id="3.1.15.-" evidence="1"/>
<dbReference type="EMBL" id="AM039952">
    <property type="protein sequence ID" value="CAJ23877.1"/>
    <property type="molecule type" value="Genomic_DNA"/>
</dbReference>
<dbReference type="RefSeq" id="WP_008577153.1">
    <property type="nucleotide sequence ID" value="NZ_CP017190.1"/>
</dbReference>
<dbReference type="SMR" id="Q3BTI2"/>
<dbReference type="STRING" id="456327.BJD11_11400"/>
<dbReference type="GeneID" id="61779124"/>
<dbReference type="KEGG" id="xcv:XCV2200"/>
<dbReference type="eggNOG" id="COG1949">
    <property type="taxonomic scope" value="Bacteria"/>
</dbReference>
<dbReference type="HOGENOM" id="CLU_064761_2_0_6"/>
<dbReference type="Proteomes" id="UP000007069">
    <property type="component" value="Chromosome"/>
</dbReference>
<dbReference type="GO" id="GO:0005737">
    <property type="term" value="C:cytoplasm"/>
    <property type="evidence" value="ECO:0007669"/>
    <property type="project" value="UniProtKB-SubCell"/>
</dbReference>
<dbReference type="GO" id="GO:0000175">
    <property type="term" value="F:3'-5'-RNA exonuclease activity"/>
    <property type="evidence" value="ECO:0007669"/>
    <property type="project" value="InterPro"/>
</dbReference>
<dbReference type="GO" id="GO:0003676">
    <property type="term" value="F:nucleic acid binding"/>
    <property type="evidence" value="ECO:0007669"/>
    <property type="project" value="InterPro"/>
</dbReference>
<dbReference type="GO" id="GO:0006259">
    <property type="term" value="P:DNA metabolic process"/>
    <property type="evidence" value="ECO:0007669"/>
    <property type="project" value="UniProtKB-ARBA"/>
</dbReference>
<dbReference type="CDD" id="cd06135">
    <property type="entry name" value="Orn"/>
    <property type="match status" value="1"/>
</dbReference>
<dbReference type="FunFam" id="3.30.420.10:FF:000003">
    <property type="entry name" value="Oligoribonuclease"/>
    <property type="match status" value="1"/>
</dbReference>
<dbReference type="Gene3D" id="3.30.420.10">
    <property type="entry name" value="Ribonuclease H-like superfamily/Ribonuclease H"/>
    <property type="match status" value="1"/>
</dbReference>
<dbReference type="HAMAP" id="MF_00045">
    <property type="entry name" value="Oligoribonuclease"/>
    <property type="match status" value="1"/>
</dbReference>
<dbReference type="InterPro" id="IPR013520">
    <property type="entry name" value="Exonuclease_RNaseT/DNA_pol3"/>
</dbReference>
<dbReference type="InterPro" id="IPR022894">
    <property type="entry name" value="Oligoribonuclease"/>
</dbReference>
<dbReference type="InterPro" id="IPR012337">
    <property type="entry name" value="RNaseH-like_sf"/>
</dbReference>
<dbReference type="InterPro" id="IPR036397">
    <property type="entry name" value="RNaseH_sf"/>
</dbReference>
<dbReference type="NCBIfam" id="NF003765">
    <property type="entry name" value="PRK05359.1"/>
    <property type="match status" value="1"/>
</dbReference>
<dbReference type="PANTHER" id="PTHR11046">
    <property type="entry name" value="OLIGORIBONUCLEASE, MITOCHONDRIAL"/>
    <property type="match status" value="1"/>
</dbReference>
<dbReference type="PANTHER" id="PTHR11046:SF0">
    <property type="entry name" value="OLIGORIBONUCLEASE, MITOCHONDRIAL"/>
    <property type="match status" value="1"/>
</dbReference>
<dbReference type="Pfam" id="PF00929">
    <property type="entry name" value="RNase_T"/>
    <property type="match status" value="1"/>
</dbReference>
<dbReference type="SMART" id="SM00479">
    <property type="entry name" value="EXOIII"/>
    <property type="match status" value="1"/>
</dbReference>
<dbReference type="SUPFAM" id="SSF53098">
    <property type="entry name" value="Ribonuclease H-like"/>
    <property type="match status" value="1"/>
</dbReference>
<feature type="chain" id="PRO_1000004297" description="Oligoribonuclease">
    <location>
        <begin position="1"/>
        <end position="194"/>
    </location>
</feature>
<feature type="domain" description="Exonuclease" evidence="1">
    <location>
        <begin position="11"/>
        <end position="174"/>
    </location>
</feature>
<feature type="active site" evidence="1">
    <location>
        <position position="132"/>
    </location>
</feature>
<sequence>MAENLAGNDRLIWIDLEMTGLDTDRDSIIEIATIVTDAQLNVLAEGPELAIAHPLETLEAMDEWNRNQHRRSGLWQRVLDSQVTHAQAEAQTVAFLSEWIRAGASPMCGNSICQDRRFLHRQMSRLERYFHYRNLDVSTIKELARRWAPSVANGFAKSSAHTALSDVRDSIDELRHYRQFMGALGGDAAAGVEG</sequence>
<name>ORN_XANE5</name>
<evidence type="ECO:0000255" key="1">
    <source>
        <dbReference type="HAMAP-Rule" id="MF_00045"/>
    </source>
</evidence>
<proteinExistence type="inferred from homology"/>
<keyword id="KW-0963">Cytoplasm</keyword>
<keyword id="KW-0269">Exonuclease</keyword>
<keyword id="KW-0378">Hydrolase</keyword>
<keyword id="KW-0540">Nuclease</keyword>
<accession>Q3BTI2</accession>
<comment type="function">
    <text evidence="1">3'-to-5' exoribonuclease specific for small oligoribonucleotides.</text>
</comment>
<comment type="subcellular location">
    <subcellularLocation>
        <location evidence="1">Cytoplasm</location>
    </subcellularLocation>
</comment>
<comment type="similarity">
    <text evidence="1">Belongs to the oligoribonuclease family.</text>
</comment>
<gene>
    <name evidence="1" type="primary">orn</name>
    <name type="ordered locus">XCV2200</name>
</gene>